<keyword id="KW-0963">Cytoplasm</keyword>
<keyword id="KW-0716">Sensory transduction</keyword>
<evidence type="ECO:0000305" key="1"/>
<feature type="chain" id="PRO_0000205212" description="Arrestin red cell isoform 2">
    <location>
        <begin position="1"/>
        <end position="405"/>
    </location>
</feature>
<accession>P51467</accession>
<proteinExistence type="evidence at transcript level"/>
<dbReference type="EMBL" id="U48411">
    <property type="protein sequence ID" value="AAB16955.1"/>
    <property type="molecule type" value="mRNA"/>
</dbReference>
<dbReference type="PIR" id="S68254">
    <property type="entry name" value="S68254"/>
</dbReference>
<dbReference type="RefSeq" id="NP_001165370.1">
    <property type="nucleotide sequence ID" value="NM_001171899.1"/>
</dbReference>
<dbReference type="SMR" id="P51467"/>
<dbReference type="GeneID" id="100335039"/>
<dbReference type="KEGG" id="omy:100335039"/>
<dbReference type="OrthoDB" id="298939at2759"/>
<dbReference type="Proteomes" id="UP000694395">
    <property type="component" value="Unplaced"/>
</dbReference>
<dbReference type="GO" id="GO:0005737">
    <property type="term" value="C:cytoplasm"/>
    <property type="evidence" value="ECO:0007669"/>
    <property type="project" value="UniProtKB-SubCell"/>
</dbReference>
<dbReference type="GO" id="GO:0031701">
    <property type="term" value="F:angiotensin receptor binding"/>
    <property type="evidence" value="ECO:0007669"/>
    <property type="project" value="TreeGrafter"/>
</dbReference>
<dbReference type="GO" id="GO:0002031">
    <property type="term" value="P:G protein-coupled receptor internalization"/>
    <property type="evidence" value="ECO:0007669"/>
    <property type="project" value="TreeGrafter"/>
</dbReference>
<dbReference type="GO" id="GO:0007399">
    <property type="term" value="P:nervous system development"/>
    <property type="evidence" value="ECO:0007669"/>
    <property type="project" value="UniProtKB-ARBA"/>
</dbReference>
<dbReference type="GO" id="GO:0070374">
    <property type="term" value="P:positive regulation of ERK1 and ERK2 cascade"/>
    <property type="evidence" value="ECO:0007669"/>
    <property type="project" value="TreeGrafter"/>
</dbReference>
<dbReference type="GO" id="GO:0007165">
    <property type="term" value="P:signal transduction"/>
    <property type="evidence" value="ECO:0007669"/>
    <property type="project" value="InterPro"/>
</dbReference>
<dbReference type="FunFam" id="2.60.40.640:FF:000003">
    <property type="entry name" value="beta-arrestin-1 isoform X1"/>
    <property type="match status" value="1"/>
</dbReference>
<dbReference type="FunFam" id="2.60.40.840:FF:000001">
    <property type="entry name" value="beta-arrestin-1 isoform X1"/>
    <property type="match status" value="1"/>
</dbReference>
<dbReference type="Gene3D" id="2.60.40.640">
    <property type="match status" value="1"/>
</dbReference>
<dbReference type="Gene3D" id="2.60.40.840">
    <property type="match status" value="1"/>
</dbReference>
<dbReference type="InterPro" id="IPR000698">
    <property type="entry name" value="Arrestin"/>
</dbReference>
<dbReference type="InterPro" id="IPR014752">
    <property type="entry name" value="Arrestin-like_C"/>
</dbReference>
<dbReference type="InterPro" id="IPR011021">
    <property type="entry name" value="Arrestin-like_N"/>
</dbReference>
<dbReference type="InterPro" id="IPR011022">
    <property type="entry name" value="Arrestin_C-like"/>
</dbReference>
<dbReference type="InterPro" id="IPR017864">
    <property type="entry name" value="Arrestin_CS"/>
</dbReference>
<dbReference type="InterPro" id="IPR014753">
    <property type="entry name" value="Arrestin_N"/>
</dbReference>
<dbReference type="InterPro" id="IPR014756">
    <property type="entry name" value="Ig_E-set"/>
</dbReference>
<dbReference type="PANTHER" id="PTHR11792">
    <property type="entry name" value="ARRESTIN"/>
    <property type="match status" value="1"/>
</dbReference>
<dbReference type="PANTHER" id="PTHR11792:SF20">
    <property type="entry name" value="BETA-ARRESTIN-2"/>
    <property type="match status" value="1"/>
</dbReference>
<dbReference type="Pfam" id="PF02752">
    <property type="entry name" value="Arrestin_C"/>
    <property type="match status" value="1"/>
</dbReference>
<dbReference type="Pfam" id="PF00339">
    <property type="entry name" value="Arrestin_N"/>
    <property type="match status" value="1"/>
</dbReference>
<dbReference type="PRINTS" id="PR00309">
    <property type="entry name" value="ARRESTIN"/>
</dbReference>
<dbReference type="SMART" id="SM01017">
    <property type="entry name" value="Arrestin_C"/>
    <property type="match status" value="1"/>
</dbReference>
<dbReference type="SUPFAM" id="SSF81296">
    <property type="entry name" value="E set domains"/>
    <property type="match status" value="2"/>
</dbReference>
<dbReference type="PROSITE" id="PS00295">
    <property type="entry name" value="ARRESTINS"/>
    <property type="match status" value="1"/>
</dbReference>
<organism>
    <name type="scientific">Oncorhynchus mykiss</name>
    <name type="common">Rainbow trout</name>
    <name type="synonym">Salmo gairdneri</name>
    <dbReference type="NCBI Taxonomy" id="8022"/>
    <lineage>
        <taxon>Eukaryota</taxon>
        <taxon>Metazoa</taxon>
        <taxon>Chordata</taxon>
        <taxon>Craniata</taxon>
        <taxon>Vertebrata</taxon>
        <taxon>Euteleostomi</taxon>
        <taxon>Actinopterygii</taxon>
        <taxon>Neopterygii</taxon>
        <taxon>Teleostei</taxon>
        <taxon>Protacanthopterygii</taxon>
        <taxon>Salmoniformes</taxon>
        <taxon>Salmonidae</taxon>
        <taxon>Salmoninae</taxon>
        <taxon>Oncorhynchus</taxon>
    </lineage>
</organism>
<protein>
    <recommendedName>
        <fullName>Arrestin red cell isoform 2</fullName>
    </recommendedName>
    <alternativeName>
        <fullName>TrCarr 2</fullName>
    </alternativeName>
</protein>
<name>ARR2_ONCMY</name>
<reference key="1">
    <citation type="journal article" date="1996" name="Biochem. J.">
        <title>Trout red blood cell arrestin (TRCarr), a novel member of the arrestin family: cloning, immunoprecipitation and expression of recombinant TRCarr.</title>
        <authorList>
            <person name="Jahns R."/>
            <person name="Borgese F."/>
            <person name="Lindenthal S."/>
            <person name="Straub A."/>
            <person name="Motais R."/>
            <person name="Fievet B."/>
        </authorList>
    </citation>
    <scope>NUCLEOTIDE SEQUENCE [MRNA]</scope>
</reference>
<sequence>MGDKAGTRVFKKSSPNCKVTVYLGKRDFVDHLDQVDPVDGVILVDPDYLKERKVFVTLTCAFRYGREDLDVLGLSFRKDLYISTFQAFPPIAEERKANSRLQERLLKKLGQQAHPFYFTIPQNLPCSVTLQPGPEDTGKACGVDFEIRAFCAKSIEEKIHKRNSVRLVIRKVQYAPEKPGPQPMVETTRSFLMSDRSLHLEASLDKELYYHGEPISVNVHVTNNSTKTVKRVKISVRQYADICLFSTAQYKCPVAQVEADDQVSSSSTFCKVYTLTPTLDKNREKRGLALDGKLKHEDTNLASSTIVKDVTNKEVLGILVSYRVKVKLVISRGGDVSVELPFVLMHPKPTELPISRPHSAVPESDPPIDTNLIEFESNSFSQDDDFVFEDFARLRLKGMADDEDC</sequence>
<comment type="subcellular location">
    <subcellularLocation>
        <location evidence="1">Cytoplasm</location>
    </subcellularLocation>
</comment>
<comment type="similarity">
    <text evidence="1">Belongs to the arrestin family.</text>
</comment>